<organism>
    <name type="scientific">Staphylococcus aureus (strain MRSA252)</name>
    <dbReference type="NCBI Taxonomy" id="282458"/>
    <lineage>
        <taxon>Bacteria</taxon>
        <taxon>Bacillati</taxon>
        <taxon>Bacillota</taxon>
        <taxon>Bacilli</taxon>
        <taxon>Bacillales</taxon>
        <taxon>Staphylococcaceae</taxon>
        <taxon>Staphylococcus</taxon>
    </lineage>
</organism>
<proteinExistence type="inferred from homology"/>
<name>AROE_STAAR</name>
<protein>
    <recommendedName>
        <fullName evidence="1">Shikimate dehydrogenase (NADP(+))</fullName>
        <shortName evidence="1">SDH</shortName>
        <ecNumber evidence="1">1.1.1.25</ecNumber>
    </recommendedName>
</protein>
<reference key="1">
    <citation type="journal article" date="2004" name="Proc. Natl. Acad. Sci. U.S.A.">
        <title>Complete genomes of two clinical Staphylococcus aureus strains: evidence for the rapid evolution of virulence and drug resistance.</title>
        <authorList>
            <person name="Holden M.T.G."/>
            <person name="Feil E.J."/>
            <person name="Lindsay J.A."/>
            <person name="Peacock S.J."/>
            <person name="Day N.P.J."/>
            <person name="Enright M.C."/>
            <person name="Foster T.J."/>
            <person name="Moore C.E."/>
            <person name="Hurst L."/>
            <person name="Atkin R."/>
            <person name="Barron A."/>
            <person name="Bason N."/>
            <person name="Bentley S.D."/>
            <person name="Chillingworth C."/>
            <person name="Chillingworth T."/>
            <person name="Churcher C."/>
            <person name="Clark L."/>
            <person name="Corton C."/>
            <person name="Cronin A."/>
            <person name="Doggett J."/>
            <person name="Dowd L."/>
            <person name="Feltwell T."/>
            <person name="Hance Z."/>
            <person name="Harris B."/>
            <person name="Hauser H."/>
            <person name="Holroyd S."/>
            <person name="Jagels K."/>
            <person name="James K.D."/>
            <person name="Lennard N."/>
            <person name="Line A."/>
            <person name="Mayes R."/>
            <person name="Moule S."/>
            <person name="Mungall K."/>
            <person name="Ormond D."/>
            <person name="Quail M.A."/>
            <person name="Rabbinowitsch E."/>
            <person name="Rutherford K.M."/>
            <person name="Sanders M."/>
            <person name="Sharp S."/>
            <person name="Simmonds M."/>
            <person name="Stevens K."/>
            <person name="Whitehead S."/>
            <person name="Barrell B.G."/>
            <person name="Spratt B.G."/>
            <person name="Parkhill J."/>
        </authorList>
    </citation>
    <scope>NUCLEOTIDE SEQUENCE [LARGE SCALE GENOMIC DNA]</scope>
    <source>
        <strain>MRSA252</strain>
    </source>
</reference>
<sequence>MKFAVIGNPISHSLSPVMHRANFNSLGLDDTYEALNIPIEDFHLIKEIISKKELDGFNITIPHKERIIPYLDHVDEQAINAGAVNTVLIKDGKWIGYNTDGIGYVKGLHSVYPDLENAYILILGAGGASKGIAYELAKFVKPKLTVANRTMARFESWNLNINQISLADAEKYLAEFDIVINTTPAGMAGNNESIINLKHLSPNTLMSDIVYIPYKTPILEEAERKGNHIYNGLDMFVYQGAESFKIWTNKDADINSMKTAVLQQLKGE</sequence>
<gene>
    <name evidence="1" type="primary">aroE</name>
    <name type="ordered locus">SAR1673</name>
</gene>
<comment type="function">
    <text evidence="1">Involved in the biosynthesis of the chorismate, which leads to the biosynthesis of aromatic amino acids. Catalyzes the reversible NADPH linked reduction of 3-dehydroshikimate (DHSA) to yield shikimate (SA).</text>
</comment>
<comment type="catalytic activity">
    <reaction evidence="1">
        <text>shikimate + NADP(+) = 3-dehydroshikimate + NADPH + H(+)</text>
        <dbReference type="Rhea" id="RHEA:17737"/>
        <dbReference type="ChEBI" id="CHEBI:15378"/>
        <dbReference type="ChEBI" id="CHEBI:16630"/>
        <dbReference type="ChEBI" id="CHEBI:36208"/>
        <dbReference type="ChEBI" id="CHEBI:57783"/>
        <dbReference type="ChEBI" id="CHEBI:58349"/>
        <dbReference type="EC" id="1.1.1.25"/>
    </reaction>
</comment>
<comment type="pathway">
    <text evidence="1">Metabolic intermediate biosynthesis; chorismate biosynthesis; chorismate from D-erythrose 4-phosphate and phosphoenolpyruvate: step 4/7.</text>
</comment>
<comment type="subunit">
    <text evidence="1">Homodimer.</text>
</comment>
<comment type="similarity">
    <text evidence="1">Belongs to the shikimate dehydrogenase family.</text>
</comment>
<accession>Q6GGA5</accession>
<dbReference type="EC" id="1.1.1.25" evidence="1"/>
<dbReference type="EMBL" id="BX571856">
    <property type="protein sequence ID" value="CAG40667.1"/>
    <property type="molecule type" value="Genomic_DNA"/>
</dbReference>
<dbReference type="RefSeq" id="WP_000666750.1">
    <property type="nucleotide sequence ID" value="NC_002952.2"/>
</dbReference>
<dbReference type="SMR" id="Q6GGA5"/>
<dbReference type="KEGG" id="sar:SAR1673"/>
<dbReference type="HOGENOM" id="CLU_044063_4_1_9"/>
<dbReference type="UniPathway" id="UPA00053">
    <property type="reaction ID" value="UER00087"/>
</dbReference>
<dbReference type="Proteomes" id="UP000000596">
    <property type="component" value="Chromosome"/>
</dbReference>
<dbReference type="GO" id="GO:0005829">
    <property type="term" value="C:cytosol"/>
    <property type="evidence" value="ECO:0007669"/>
    <property type="project" value="TreeGrafter"/>
</dbReference>
<dbReference type="GO" id="GO:0050661">
    <property type="term" value="F:NADP binding"/>
    <property type="evidence" value="ECO:0007669"/>
    <property type="project" value="InterPro"/>
</dbReference>
<dbReference type="GO" id="GO:0004764">
    <property type="term" value="F:shikimate 3-dehydrogenase (NADP+) activity"/>
    <property type="evidence" value="ECO:0007669"/>
    <property type="project" value="UniProtKB-UniRule"/>
</dbReference>
<dbReference type="GO" id="GO:0008652">
    <property type="term" value="P:amino acid biosynthetic process"/>
    <property type="evidence" value="ECO:0007669"/>
    <property type="project" value="UniProtKB-KW"/>
</dbReference>
<dbReference type="GO" id="GO:0009073">
    <property type="term" value="P:aromatic amino acid family biosynthetic process"/>
    <property type="evidence" value="ECO:0007669"/>
    <property type="project" value="UniProtKB-KW"/>
</dbReference>
<dbReference type="GO" id="GO:0009423">
    <property type="term" value="P:chorismate biosynthetic process"/>
    <property type="evidence" value="ECO:0007669"/>
    <property type="project" value="UniProtKB-UniRule"/>
</dbReference>
<dbReference type="GO" id="GO:0019632">
    <property type="term" value="P:shikimate metabolic process"/>
    <property type="evidence" value="ECO:0007669"/>
    <property type="project" value="InterPro"/>
</dbReference>
<dbReference type="CDD" id="cd01065">
    <property type="entry name" value="NAD_bind_Shikimate_DH"/>
    <property type="match status" value="1"/>
</dbReference>
<dbReference type="FunFam" id="3.40.50.10860:FF:000016">
    <property type="entry name" value="Shikimate dehydrogenase (NADP(+))"/>
    <property type="match status" value="1"/>
</dbReference>
<dbReference type="FunFam" id="3.40.50.720:FF:000445">
    <property type="entry name" value="Shikimate dehydrogenase (NADP(+))"/>
    <property type="match status" value="1"/>
</dbReference>
<dbReference type="Gene3D" id="3.40.50.10860">
    <property type="entry name" value="Leucine Dehydrogenase, chain A, domain 1"/>
    <property type="match status" value="1"/>
</dbReference>
<dbReference type="Gene3D" id="3.40.50.720">
    <property type="entry name" value="NAD(P)-binding Rossmann-like Domain"/>
    <property type="match status" value="1"/>
</dbReference>
<dbReference type="HAMAP" id="MF_00222">
    <property type="entry name" value="Shikimate_DH_AroE"/>
    <property type="match status" value="1"/>
</dbReference>
<dbReference type="InterPro" id="IPR046346">
    <property type="entry name" value="Aminoacid_DH-like_N_sf"/>
</dbReference>
<dbReference type="InterPro" id="IPR036291">
    <property type="entry name" value="NAD(P)-bd_dom_sf"/>
</dbReference>
<dbReference type="InterPro" id="IPR041121">
    <property type="entry name" value="SDH_C"/>
</dbReference>
<dbReference type="InterPro" id="IPR011342">
    <property type="entry name" value="Shikimate_DH"/>
</dbReference>
<dbReference type="InterPro" id="IPR013708">
    <property type="entry name" value="Shikimate_DH-bd_N"/>
</dbReference>
<dbReference type="InterPro" id="IPR022893">
    <property type="entry name" value="Shikimate_DH_fam"/>
</dbReference>
<dbReference type="InterPro" id="IPR006151">
    <property type="entry name" value="Shikm_DH/Glu-tRNA_Rdtase"/>
</dbReference>
<dbReference type="NCBIfam" id="TIGR00507">
    <property type="entry name" value="aroE"/>
    <property type="match status" value="1"/>
</dbReference>
<dbReference type="PANTHER" id="PTHR21089:SF1">
    <property type="entry name" value="BIFUNCTIONAL 3-DEHYDROQUINATE DEHYDRATASE_SHIKIMATE DEHYDROGENASE, CHLOROPLASTIC"/>
    <property type="match status" value="1"/>
</dbReference>
<dbReference type="PANTHER" id="PTHR21089">
    <property type="entry name" value="SHIKIMATE DEHYDROGENASE"/>
    <property type="match status" value="1"/>
</dbReference>
<dbReference type="Pfam" id="PF18317">
    <property type="entry name" value="SDH_C"/>
    <property type="match status" value="1"/>
</dbReference>
<dbReference type="Pfam" id="PF01488">
    <property type="entry name" value="Shikimate_DH"/>
    <property type="match status" value="1"/>
</dbReference>
<dbReference type="Pfam" id="PF08501">
    <property type="entry name" value="Shikimate_dh_N"/>
    <property type="match status" value="1"/>
</dbReference>
<dbReference type="SUPFAM" id="SSF53223">
    <property type="entry name" value="Aminoacid dehydrogenase-like, N-terminal domain"/>
    <property type="match status" value="1"/>
</dbReference>
<dbReference type="SUPFAM" id="SSF51735">
    <property type="entry name" value="NAD(P)-binding Rossmann-fold domains"/>
    <property type="match status" value="1"/>
</dbReference>
<keyword id="KW-0028">Amino-acid biosynthesis</keyword>
<keyword id="KW-0057">Aromatic amino acid biosynthesis</keyword>
<keyword id="KW-0521">NADP</keyword>
<keyword id="KW-0560">Oxidoreductase</keyword>
<evidence type="ECO:0000255" key="1">
    <source>
        <dbReference type="HAMAP-Rule" id="MF_00222"/>
    </source>
</evidence>
<feature type="chain" id="PRO_0000136033" description="Shikimate dehydrogenase (NADP(+))">
    <location>
        <begin position="1"/>
        <end position="268"/>
    </location>
</feature>
<feature type="active site" description="Proton acceptor" evidence="1">
    <location>
        <position position="64"/>
    </location>
</feature>
<feature type="binding site" evidence="1">
    <location>
        <begin position="13"/>
        <end position="15"/>
    </location>
    <ligand>
        <name>shikimate</name>
        <dbReference type="ChEBI" id="CHEBI:36208"/>
    </ligand>
</feature>
<feature type="binding site" evidence="1">
    <location>
        <position position="60"/>
    </location>
    <ligand>
        <name>shikimate</name>
        <dbReference type="ChEBI" id="CHEBI:36208"/>
    </ligand>
</feature>
<feature type="binding site" evidence="1">
    <location>
        <position position="76"/>
    </location>
    <ligand>
        <name>NADP(+)</name>
        <dbReference type="ChEBI" id="CHEBI:58349"/>
    </ligand>
</feature>
<feature type="binding site" evidence="1">
    <location>
        <position position="85"/>
    </location>
    <ligand>
        <name>shikimate</name>
        <dbReference type="ChEBI" id="CHEBI:36208"/>
    </ligand>
</feature>
<feature type="binding site" evidence="1">
    <location>
        <position position="100"/>
    </location>
    <ligand>
        <name>shikimate</name>
        <dbReference type="ChEBI" id="CHEBI:36208"/>
    </ligand>
</feature>
<feature type="binding site" evidence="1">
    <location>
        <begin position="124"/>
        <end position="128"/>
    </location>
    <ligand>
        <name>NADP(+)</name>
        <dbReference type="ChEBI" id="CHEBI:58349"/>
    </ligand>
</feature>
<feature type="binding site" evidence="1">
    <location>
        <begin position="148"/>
        <end position="153"/>
    </location>
    <ligand>
        <name>NADP(+)</name>
        <dbReference type="ChEBI" id="CHEBI:58349"/>
    </ligand>
</feature>
<feature type="binding site" evidence="1">
    <location>
        <position position="209"/>
    </location>
    <ligand>
        <name>NADP(+)</name>
        <dbReference type="ChEBI" id="CHEBI:58349"/>
    </ligand>
</feature>
<feature type="binding site" evidence="1">
    <location>
        <position position="211"/>
    </location>
    <ligand>
        <name>shikimate</name>
        <dbReference type="ChEBI" id="CHEBI:36208"/>
    </ligand>
</feature>
<feature type="binding site" evidence="1">
    <location>
        <position position="232"/>
    </location>
    <ligand>
        <name>NADP(+)</name>
        <dbReference type="ChEBI" id="CHEBI:58349"/>
    </ligand>
</feature>